<protein>
    <recommendedName>
        <fullName evidence="1">Imidazole glycerol phosphate synthase subunit HisF</fullName>
        <ecNumber evidence="1">4.3.2.10</ecNumber>
    </recommendedName>
    <alternativeName>
        <fullName evidence="1">IGP synthase cyclase subunit</fullName>
    </alternativeName>
    <alternativeName>
        <fullName evidence="1">IGP synthase subunit HisF</fullName>
    </alternativeName>
    <alternativeName>
        <fullName evidence="1">ImGP synthase subunit HisF</fullName>
        <shortName evidence="1">IGPS subunit HisF</shortName>
    </alternativeName>
</protein>
<proteinExistence type="inferred from homology"/>
<gene>
    <name evidence="1" type="primary">hisF</name>
    <name type="ordered locus">Ctha_0100</name>
</gene>
<sequence length="251" mass="27192">MLAKRIIPCLDVKNGRVVKGVQFEELRDAGSILEQAKFYNDELADELVFLDISASIESRRTTLEEVLKVSEQVFIPLTVGGGINSVERAREAFLHGADKVSVNTSAVKEPTLISELAERFGSQAVVVAIDIKNVGSHYEVFTHSGKTPTGLDTLEWAHKVVELGAGEILLTSMDRDGTQKGYDNVILKEISTSVGVPVIASGGAGNLQHLYEGFSIGMADAALAASIFHFRQHSVREAKAFLQEKGIAIRL</sequence>
<keyword id="KW-0028">Amino-acid biosynthesis</keyword>
<keyword id="KW-0963">Cytoplasm</keyword>
<keyword id="KW-0368">Histidine biosynthesis</keyword>
<keyword id="KW-0456">Lyase</keyword>
<keyword id="KW-1185">Reference proteome</keyword>
<comment type="function">
    <text evidence="1">IGPS catalyzes the conversion of PRFAR and glutamine to IGP, AICAR and glutamate. The HisF subunit catalyzes the cyclization activity that produces IGP and AICAR from PRFAR using the ammonia provided by the HisH subunit.</text>
</comment>
<comment type="catalytic activity">
    <reaction evidence="1">
        <text>5-[(5-phospho-1-deoxy-D-ribulos-1-ylimino)methylamino]-1-(5-phospho-beta-D-ribosyl)imidazole-4-carboxamide + L-glutamine = D-erythro-1-(imidazol-4-yl)glycerol 3-phosphate + 5-amino-1-(5-phospho-beta-D-ribosyl)imidazole-4-carboxamide + L-glutamate + H(+)</text>
        <dbReference type="Rhea" id="RHEA:24793"/>
        <dbReference type="ChEBI" id="CHEBI:15378"/>
        <dbReference type="ChEBI" id="CHEBI:29985"/>
        <dbReference type="ChEBI" id="CHEBI:58278"/>
        <dbReference type="ChEBI" id="CHEBI:58359"/>
        <dbReference type="ChEBI" id="CHEBI:58475"/>
        <dbReference type="ChEBI" id="CHEBI:58525"/>
        <dbReference type="EC" id="4.3.2.10"/>
    </reaction>
</comment>
<comment type="pathway">
    <text evidence="1">Amino-acid biosynthesis; L-histidine biosynthesis; L-histidine from 5-phospho-alpha-D-ribose 1-diphosphate: step 5/9.</text>
</comment>
<comment type="subunit">
    <text evidence="1">Heterodimer of HisH and HisF.</text>
</comment>
<comment type="subcellular location">
    <subcellularLocation>
        <location evidence="1">Cytoplasm</location>
    </subcellularLocation>
</comment>
<comment type="similarity">
    <text evidence="1">Belongs to the HisA/HisF family.</text>
</comment>
<accession>B3QSI0</accession>
<organism>
    <name type="scientific">Chloroherpeton thalassium (strain ATCC 35110 / GB-78)</name>
    <dbReference type="NCBI Taxonomy" id="517418"/>
    <lineage>
        <taxon>Bacteria</taxon>
        <taxon>Pseudomonadati</taxon>
        <taxon>Chlorobiota</taxon>
        <taxon>Chlorobiia</taxon>
        <taxon>Chlorobiales</taxon>
        <taxon>Chloroherpetonaceae</taxon>
        <taxon>Chloroherpeton</taxon>
    </lineage>
</organism>
<feature type="chain" id="PRO_1000134981" description="Imidazole glycerol phosphate synthase subunit HisF">
    <location>
        <begin position="1"/>
        <end position="251"/>
    </location>
</feature>
<feature type="active site" evidence="1">
    <location>
        <position position="11"/>
    </location>
</feature>
<feature type="active site" evidence="1">
    <location>
        <position position="130"/>
    </location>
</feature>
<dbReference type="EC" id="4.3.2.10" evidence="1"/>
<dbReference type="EMBL" id="CP001100">
    <property type="protein sequence ID" value="ACF12571.1"/>
    <property type="molecule type" value="Genomic_DNA"/>
</dbReference>
<dbReference type="RefSeq" id="WP_012498655.1">
    <property type="nucleotide sequence ID" value="NC_011026.1"/>
</dbReference>
<dbReference type="SMR" id="B3QSI0"/>
<dbReference type="STRING" id="517418.Ctha_0100"/>
<dbReference type="KEGG" id="cts:Ctha_0100"/>
<dbReference type="eggNOG" id="COG0107">
    <property type="taxonomic scope" value="Bacteria"/>
</dbReference>
<dbReference type="HOGENOM" id="CLU_048577_4_0_10"/>
<dbReference type="OrthoDB" id="9781903at2"/>
<dbReference type="UniPathway" id="UPA00031">
    <property type="reaction ID" value="UER00010"/>
</dbReference>
<dbReference type="Proteomes" id="UP000001208">
    <property type="component" value="Chromosome"/>
</dbReference>
<dbReference type="GO" id="GO:0005737">
    <property type="term" value="C:cytoplasm"/>
    <property type="evidence" value="ECO:0007669"/>
    <property type="project" value="UniProtKB-SubCell"/>
</dbReference>
<dbReference type="GO" id="GO:0000107">
    <property type="term" value="F:imidazoleglycerol-phosphate synthase activity"/>
    <property type="evidence" value="ECO:0007669"/>
    <property type="project" value="UniProtKB-UniRule"/>
</dbReference>
<dbReference type="GO" id="GO:0016829">
    <property type="term" value="F:lyase activity"/>
    <property type="evidence" value="ECO:0007669"/>
    <property type="project" value="UniProtKB-KW"/>
</dbReference>
<dbReference type="GO" id="GO:0000105">
    <property type="term" value="P:L-histidine biosynthetic process"/>
    <property type="evidence" value="ECO:0007669"/>
    <property type="project" value="UniProtKB-UniRule"/>
</dbReference>
<dbReference type="CDD" id="cd04731">
    <property type="entry name" value="HisF"/>
    <property type="match status" value="1"/>
</dbReference>
<dbReference type="FunFam" id="3.20.20.70:FF:000006">
    <property type="entry name" value="Imidazole glycerol phosphate synthase subunit HisF"/>
    <property type="match status" value="1"/>
</dbReference>
<dbReference type="Gene3D" id="3.20.20.70">
    <property type="entry name" value="Aldolase class I"/>
    <property type="match status" value="1"/>
</dbReference>
<dbReference type="HAMAP" id="MF_01013">
    <property type="entry name" value="HisF"/>
    <property type="match status" value="1"/>
</dbReference>
<dbReference type="InterPro" id="IPR013785">
    <property type="entry name" value="Aldolase_TIM"/>
</dbReference>
<dbReference type="InterPro" id="IPR006062">
    <property type="entry name" value="His_biosynth"/>
</dbReference>
<dbReference type="InterPro" id="IPR004651">
    <property type="entry name" value="HisF"/>
</dbReference>
<dbReference type="InterPro" id="IPR050064">
    <property type="entry name" value="IGPS_HisA/HisF"/>
</dbReference>
<dbReference type="InterPro" id="IPR011060">
    <property type="entry name" value="RibuloseP-bd_barrel"/>
</dbReference>
<dbReference type="NCBIfam" id="TIGR00735">
    <property type="entry name" value="hisF"/>
    <property type="match status" value="1"/>
</dbReference>
<dbReference type="PANTHER" id="PTHR21235:SF2">
    <property type="entry name" value="IMIDAZOLE GLYCEROL PHOSPHATE SYNTHASE HISHF"/>
    <property type="match status" value="1"/>
</dbReference>
<dbReference type="PANTHER" id="PTHR21235">
    <property type="entry name" value="IMIDAZOLE GLYCEROL PHOSPHATE SYNTHASE SUBUNIT HISF/H IGP SYNTHASE SUBUNIT HISF/H"/>
    <property type="match status" value="1"/>
</dbReference>
<dbReference type="Pfam" id="PF00977">
    <property type="entry name" value="His_biosynth"/>
    <property type="match status" value="1"/>
</dbReference>
<dbReference type="SUPFAM" id="SSF51366">
    <property type="entry name" value="Ribulose-phoshate binding barrel"/>
    <property type="match status" value="1"/>
</dbReference>
<evidence type="ECO:0000255" key="1">
    <source>
        <dbReference type="HAMAP-Rule" id="MF_01013"/>
    </source>
</evidence>
<reference key="1">
    <citation type="submission" date="2008-06" db="EMBL/GenBank/DDBJ databases">
        <title>Complete sequence of Chloroherpeton thalassium ATCC 35110.</title>
        <authorList>
            <consortium name="US DOE Joint Genome Institute"/>
            <person name="Lucas S."/>
            <person name="Copeland A."/>
            <person name="Lapidus A."/>
            <person name="Glavina del Rio T."/>
            <person name="Dalin E."/>
            <person name="Tice H."/>
            <person name="Bruce D."/>
            <person name="Goodwin L."/>
            <person name="Pitluck S."/>
            <person name="Schmutz J."/>
            <person name="Larimer F."/>
            <person name="Land M."/>
            <person name="Hauser L."/>
            <person name="Kyrpides N."/>
            <person name="Mikhailova N."/>
            <person name="Liu Z."/>
            <person name="Li T."/>
            <person name="Zhao F."/>
            <person name="Overmann J."/>
            <person name="Bryant D.A."/>
            <person name="Richardson P."/>
        </authorList>
    </citation>
    <scope>NUCLEOTIDE SEQUENCE [LARGE SCALE GENOMIC DNA]</scope>
    <source>
        <strain>ATCC 35110 / GB-78</strain>
    </source>
</reference>
<name>HIS6_CHLT3</name>